<sequence>MKRLEVSNQAKLPTQFGEFCIQCFREKGSNGSKDHLVIFTPNFPQNPLVRLHSECLTGDALGSQKCDCGGALQMALERISKEGGLVIYLRQEGRGIGLFNKVNAYALQDKGYDTIQANEMIGFKDDERDYSIAGEILEYYRIKKMRLLTNNPLKIAALEKYAEVTRESLIVCANEHNQGYLEVKKLKMGHLL</sequence>
<reference key="1">
    <citation type="journal article" date="1999" name="Nature">
        <title>Genomic sequence comparison of two unrelated isolates of the human gastric pathogen Helicobacter pylori.</title>
        <authorList>
            <person name="Alm R.A."/>
            <person name="Ling L.-S.L."/>
            <person name="Moir D.T."/>
            <person name="King B.L."/>
            <person name="Brown E.D."/>
            <person name="Doig P.C."/>
            <person name="Smith D.R."/>
            <person name="Noonan B."/>
            <person name="Guild B.C."/>
            <person name="deJonge B.L."/>
            <person name="Carmel G."/>
            <person name="Tummino P.J."/>
            <person name="Caruso A."/>
            <person name="Uria-Nickelsen M."/>
            <person name="Mills D.M."/>
            <person name="Ives C."/>
            <person name="Gibson R."/>
            <person name="Merberg D."/>
            <person name="Mills S.D."/>
            <person name="Jiang Q."/>
            <person name="Taylor D.E."/>
            <person name="Vovis G.F."/>
            <person name="Trust T.J."/>
        </authorList>
    </citation>
    <scope>NUCLEOTIDE SEQUENCE [LARGE SCALE GENOMIC DNA]</scope>
    <source>
        <strain>J99 / ATCC 700824</strain>
    </source>
</reference>
<comment type="function">
    <text evidence="1">Catalyzes the conversion of GTP to 2,5-diamino-6-ribosylamino-4(3H)-pyrimidinone 5'-phosphate (DARP), formate and pyrophosphate.</text>
</comment>
<comment type="catalytic activity">
    <reaction evidence="1">
        <text>GTP + 4 H2O = 2,5-diamino-6-hydroxy-4-(5-phosphoribosylamino)-pyrimidine + formate + 2 phosphate + 3 H(+)</text>
        <dbReference type="Rhea" id="RHEA:23704"/>
        <dbReference type="ChEBI" id="CHEBI:15377"/>
        <dbReference type="ChEBI" id="CHEBI:15378"/>
        <dbReference type="ChEBI" id="CHEBI:15740"/>
        <dbReference type="ChEBI" id="CHEBI:37565"/>
        <dbReference type="ChEBI" id="CHEBI:43474"/>
        <dbReference type="ChEBI" id="CHEBI:58614"/>
        <dbReference type="EC" id="3.5.4.25"/>
    </reaction>
</comment>
<comment type="cofactor">
    <cofactor evidence="1">
        <name>Zn(2+)</name>
        <dbReference type="ChEBI" id="CHEBI:29105"/>
    </cofactor>
    <text evidence="1">Binds 1 zinc ion per subunit.</text>
</comment>
<comment type="pathway">
    <text evidence="1">Cofactor biosynthesis; riboflavin biosynthesis; 5-amino-6-(D-ribitylamino)uracil from GTP: step 1/4.</text>
</comment>
<comment type="similarity">
    <text evidence="1">Belongs to the GTP cyclohydrolase II family.</text>
</comment>
<organism>
    <name type="scientific">Helicobacter pylori (strain J99 / ATCC 700824)</name>
    <name type="common">Campylobacter pylori J99</name>
    <dbReference type="NCBI Taxonomy" id="85963"/>
    <lineage>
        <taxon>Bacteria</taxon>
        <taxon>Pseudomonadati</taxon>
        <taxon>Campylobacterota</taxon>
        <taxon>Epsilonproteobacteria</taxon>
        <taxon>Campylobacterales</taxon>
        <taxon>Helicobacteraceae</taxon>
        <taxon>Helicobacter</taxon>
    </lineage>
</organism>
<accession>Q9ZL42</accession>
<gene>
    <name evidence="1" type="primary">ribA</name>
    <name type="ordered locus">jhp_0738</name>
</gene>
<keyword id="KW-0342">GTP-binding</keyword>
<keyword id="KW-0378">Hydrolase</keyword>
<keyword id="KW-0479">Metal-binding</keyword>
<keyword id="KW-0547">Nucleotide-binding</keyword>
<keyword id="KW-0686">Riboflavin biosynthesis</keyword>
<keyword id="KW-0862">Zinc</keyword>
<name>RIBA_HELPJ</name>
<evidence type="ECO:0000255" key="1">
    <source>
        <dbReference type="HAMAP-Rule" id="MF_00179"/>
    </source>
</evidence>
<dbReference type="EC" id="3.5.4.25" evidence="1"/>
<dbReference type="EMBL" id="AE001439">
    <property type="protein sequence ID" value="AAD06324.1"/>
    <property type="molecule type" value="Genomic_DNA"/>
</dbReference>
<dbReference type="PIR" id="A71894">
    <property type="entry name" value="A71894"/>
</dbReference>
<dbReference type="RefSeq" id="WP_010882561.1">
    <property type="nucleotide sequence ID" value="NC_000921.1"/>
</dbReference>
<dbReference type="SMR" id="Q9ZL42"/>
<dbReference type="KEGG" id="hpj:jhp_0738"/>
<dbReference type="PATRIC" id="fig|85963.30.peg.238"/>
<dbReference type="eggNOG" id="COG0807">
    <property type="taxonomic scope" value="Bacteria"/>
</dbReference>
<dbReference type="UniPathway" id="UPA00275">
    <property type="reaction ID" value="UER00400"/>
</dbReference>
<dbReference type="Proteomes" id="UP000000804">
    <property type="component" value="Chromosome"/>
</dbReference>
<dbReference type="GO" id="GO:0005829">
    <property type="term" value="C:cytosol"/>
    <property type="evidence" value="ECO:0007669"/>
    <property type="project" value="TreeGrafter"/>
</dbReference>
<dbReference type="GO" id="GO:0005525">
    <property type="term" value="F:GTP binding"/>
    <property type="evidence" value="ECO:0007669"/>
    <property type="project" value="UniProtKB-KW"/>
</dbReference>
<dbReference type="GO" id="GO:0003935">
    <property type="term" value="F:GTP cyclohydrolase II activity"/>
    <property type="evidence" value="ECO:0007669"/>
    <property type="project" value="UniProtKB-UniRule"/>
</dbReference>
<dbReference type="GO" id="GO:0008270">
    <property type="term" value="F:zinc ion binding"/>
    <property type="evidence" value="ECO:0007669"/>
    <property type="project" value="UniProtKB-UniRule"/>
</dbReference>
<dbReference type="GO" id="GO:0009231">
    <property type="term" value="P:riboflavin biosynthetic process"/>
    <property type="evidence" value="ECO:0007669"/>
    <property type="project" value="UniProtKB-UniRule"/>
</dbReference>
<dbReference type="CDD" id="cd00641">
    <property type="entry name" value="GTP_cyclohydro2"/>
    <property type="match status" value="1"/>
</dbReference>
<dbReference type="FunFam" id="3.40.50.10990:FF:000001">
    <property type="entry name" value="Riboflavin biosynthesis protein RibBA"/>
    <property type="match status" value="1"/>
</dbReference>
<dbReference type="Gene3D" id="3.40.50.10990">
    <property type="entry name" value="GTP cyclohydrolase II"/>
    <property type="match status" value="1"/>
</dbReference>
<dbReference type="HAMAP" id="MF_00179">
    <property type="entry name" value="RibA"/>
    <property type="match status" value="1"/>
</dbReference>
<dbReference type="InterPro" id="IPR032677">
    <property type="entry name" value="GTP_cyclohydro_II"/>
</dbReference>
<dbReference type="InterPro" id="IPR000926">
    <property type="entry name" value="RibA"/>
</dbReference>
<dbReference type="InterPro" id="IPR036144">
    <property type="entry name" value="RibA-like_sf"/>
</dbReference>
<dbReference type="NCBIfam" id="NF001591">
    <property type="entry name" value="PRK00393.1"/>
    <property type="match status" value="1"/>
</dbReference>
<dbReference type="NCBIfam" id="TIGR00505">
    <property type="entry name" value="ribA"/>
    <property type="match status" value="1"/>
</dbReference>
<dbReference type="PANTHER" id="PTHR21327:SF18">
    <property type="entry name" value="3,4-DIHYDROXY-2-BUTANONE 4-PHOSPHATE SYNTHASE"/>
    <property type="match status" value="1"/>
</dbReference>
<dbReference type="PANTHER" id="PTHR21327">
    <property type="entry name" value="GTP CYCLOHYDROLASE II-RELATED"/>
    <property type="match status" value="1"/>
</dbReference>
<dbReference type="Pfam" id="PF00925">
    <property type="entry name" value="GTP_cyclohydro2"/>
    <property type="match status" value="1"/>
</dbReference>
<dbReference type="SUPFAM" id="SSF142695">
    <property type="entry name" value="RibA-like"/>
    <property type="match status" value="1"/>
</dbReference>
<feature type="chain" id="PRO_0000151762" description="GTP cyclohydrolase-2">
    <location>
        <begin position="1"/>
        <end position="192"/>
    </location>
</feature>
<feature type="active site" description="Proton acceptor" evidence="1">
    <location>
        <position position="126"/>
    </location>
</feature>
<feature type="active site" description="Nucleophile" evidence="1">
    <location>
        <position position="128"/>
    </location>
</feature>
<feature type="binding site" evidence="1">
    <location>
        <begin position="50"/>
        <end position="54"/>
    </location>
    <ligand>
        <name>GTP</name>
        <dbReference type="ChEBI" id="CHEBI:37565"/>
    </ligand>
</feature>
<feature type="binding site" evidence="1">
    <location>
        <position position="55"/>
    </location>
    <ligand>
        <name>Zn(2+)</name>
        <dbReference type="ChEBI" id="CHEBI:29105"/>
        <note>catalytic</note>
    </ligand>
</feature>
<feature type="binding site" evidence="1">
    <location>
        <position position="66"/>
    </location>
    <ligand>
        <name>Zn(2+)</name>
        <dbReference type="ChEBI" id="CHEBI:29105"/>
        <note>catalytic</note>
    </ligand>
</feature>
<feature type="binding site" evidence="1">
    <location>
        <position position="68"/>
    </location>
    <ligand>
        <name>Zn(2+)</name>
        <dbReference type="ChEBI" id="CHEBI:29105"/>
        <note>catalytic</note>
    </ligand>
</feature>
<feature type="binding site" evidence="1">
    <location>
        <begin position="92"/>
        <end position="94"/>
    </location>
    <ligand>
        <name>GTP</name>
        <dbReference type="ChEBI" id="CHEBI:37565"/>
    </ligand>
</feature>
<feature type="binding site" evidence="1">
    <location>
        <position position="114"/>
    </location>
    <ligand>
        <name>GTP</name>
        <dbReference type="ChEBI" id="CHEBI:37565"/>
    </ligand>
</feature>
<feature type="binding site" evidence="1">
    <location>
        <position position="149"/>
    </location>
    <ligand>
        <name>GTP</name>
        <dbReference type="ChEBI" id="CHEBI:37565"/>
    </ligand>
</feature>
<feature type="binding site" evidence="1">
    <location>
        <position position="154"/>
    </location>
    <ligand>
        <name>GTP</name>
        <dbReference type="ChEBI" id="CHEBI:37565"/>
    </ligand>
</feature>
<protein>
    <recommendedName>
        <fullName evidence="1">GTP cyclohydrolase-2</fullName>
        <ecNumber evidence="1">3.5.4.25</ecNumber>
    </recommendedName>
    <alternativeName>
        <fullName evidence="1">GTP cyclohydrolase II</fullName>
    </alternativeName>
</protein>
<proteinExistence type="inferred from homology"/>